<comment type="function">
    <text evidence="3 4 5 6 7 8">Transcriptional repressor which binds to the consensus sequence 5'-GCTCGC-3', transcription regulation may be tissue-specific (PubMed:20016685, PubMed:20134481, PubMed:24043816, PubMed:29440408, PubMed:32557799). Regulates the expression of target genes such as: IGF2, PGAP6/TMEM8, ENHO, and PIANP (PubMed:20016685, PubMed:20134481, PubMed:24043816, PubMed:29440408, PubMed:32557799). Acts as a transcriptional repressor of growth factor IGF2, thereby negatively regulating postnatal growth of muscles and internal organs, especially in females (PubMed:20016685, PubMed:29440408, PubMed:32557799). Negatively regulates myoblast differentiation and myoblast mitochondrial activity via its regulation of IGF2 transcription (PubMed:32557799). Negatively regulates the cell cycle of myoblasts, potentially via transcriptional regulation of the E2F family of transcription factors such as: E2F1 and E2F2 (PubMed:20016685, PubMed:32557799). Positively regulates the cell cycle and survival of pancreatic beta cells (PubMed:24043816). Binds to the CDH2 gene and may directly repress CDH2 transcription (PubMed:26750727). Probably by controlling CDH2 expression, regulates pancreatic beta cell adhesion, and formation of cell-to-cell junctions between pancreatic beta cells and neural crest stem cells (PubMed:26750727). May also play a role in embryonic beta cell differentiation (PubMed:24043816). May play a role in insulin sensitivity and glucose clearance (PubMed:29440408).</text>
</comment>
<comment type="subcellular location">
    <subcellularLocation>
        <location evidence="3 5 6 8">Nucleus</location>
    </subcellularLocation>
    <subcellularLocation>
        <location evidence="3">Nucleus</location>
        <location evidence="3">Nucleolus</location>
    </subcellularLocation>
    <subcellularLocation>
        <location evidence="5 6 8">Cytoplasm</location>
    </subcellularLocation>
    <text evidence="3 5">Located predominantly in the nucleolus but is also dispersed throughout the nucleus (PubMed:20016685). Mainly cytoplasmic in insulin- and glucagon-positive islet pancreatic cells, however nuclear localization is evidence in some pancreatic endocrine cells (PubMed:24043816).</text>
</comment>
<comment type="alternative products">
    <event type="alternative initiation"/>
    <isoform>
        <id>D2EAC2-1</id>
        <name evidence="3">1</name>
        <name evidence="3">Zbed6a</name>
        <sequence type="displayed"/>
    </isoform>
    <isoform>
        <id>D2EAC2-2</id>
        <name evidence="3">2</name>
        <name evidence="3">Zbed6b</name>
        <sequence type="described" ref="VSP_053206"/>
    </isoform>
</comment>
<comment type="tissue specificity">
    <text evidence="3 5">Expressed in pancreatic islet cells and weakly expressed in surrounding exocrine tissues (at protein level) (PubMed:24043816). Expressed in muscle and brain (at protein level) (PubMed:20016685). Shows broad tissue distribution with expression detected in brain, stomach, intestine, heart, kidney, liver, lung, skeletal muscle, ovary, spleen, tail and testis (PubMed:20016685).</text>
</comment>
<comment type="developmental stage">
    <text evidence="7">Expressed in fetal muscle tissues at 12.5 dpc.</text>
</comment>
<comment type="disruption phenotype">
    <text evidence="7">Increase in body weight of mice at 20 weeks of age, at 23 weeks of age only female mice show an increase in body weight and lean mass as a result of an increase in muscle mass (PubMed:29440408). Increase in the weight of kidneys in both male and female adult mice with an increase in the weight of the liver in female mice (PubMed:29440408). Decrease in plasma insulin levels with an increase in blood glucose clearance and increased reliance on carbohydrates as a fuel source in male mice (PubMed:29440408). Increase in serum IGF2 protein levels in adult mice (PubMed:29440408). Increase in expression of IGF2, PGAP6/TMEM8, and ENHO in skeletal muscle (PubMed:29440408). Expression of ENHO and PIANP also increases in the heart and kidney, in addition to an increase of PGAP6/TMEM8 expression in the heart (PubMed:29440408). Significant increase in expression of PGAP6/TMEM8 and ENHO in fetal muscle tissue with a small marginal increase in IGF2 expression (PubMed:29440408).</text>
</comment>
<comment type="miscellaneous">
    <text evidence="3">Encoded by an exapted DNA transposon located in an intron of the Zc3h11a gene.</text>
</comment>
<comment type="sequence caution" evidence="11">
    <conflict type="erroneous initiation">
        <sequence resource="EMBL-CDS" id="BAC41160"/>
    </conflict>
    <text>Truncated N-terminus.</text>
</comment>
<accession>D2EAC2</accession>
<accession>D2EAC3</accession>
<accession>Q3UMD3</accession>
<accession>Q8C1U4</accession>
<accession>Q8CBM9</accession>
<name>ZBED6_MOUSE</name>
<gene>
    <name evidence="9" type="primary">Zbed6</name>
</gene>
<proteinExistence type="evidence at protein level"/>
<organism>
    <name type="scientific">Mus musculus</name>
    <name type="common">Mouse</name>
    <dbReference type="NCBI Taxonomy" id="10090"/>
    <lineage>
        <taxon>Eukaryota</taxon>
        <taxon>Metazoa</taxon>
        <taxon>Chordata</taxon>
        <taxon>Craniata</taxon>
        <taxon>Vertebrata</taxon>
        <taxon>Euteleostomi</taxon>
        <taxon>Mammalia</taxon>
        <taxon>Eutheria</taxon>
        <taxon>Euarchontoglires</taxon>
        <taxon>Glires</taxon>
        <taxon>Rodentia</taxon>
        <taxon>Myomorpha</taxon>
        <taxon>Muroidea</taxon>
        <taxon>Muridae</taxon>
        <taxon>Murinae</taxon>
        <taxon>Mus</taxon>
        <taxon>Mus</taxon>
    </lineage>
</organism>
<sequence length="980" mass="109152">MSVCTLSVPVSSISPGRRCSTFGDAGILGCVSINSNTDEDDVVEGKMVAEGANKETKLPAKKKRKKGLRIKGKRRRKKLILAKKFSKDLGSGRPVADAPASLASGAPEQDEESLFEGNIEKQIYLPSTRAKTSIVWHFFHVDPQYTWRAICNLCEKSVSRGKPGSHLGTSTLQRHLQARHSPHWTRANKFGVTNGEEDFTLDLSLSPPSPGSNGSFEYIPTDSVDENRMGKKRDKSASDALRAKRGRFLIKSNIVKHALIPGTRAKTSAVWNFFYTDPQHISRAVCNICKRSVSRGRPGSHLGTSTLQRHLQATHPIHWAVANKDSGAIGNGLDETETESSDLLNDTMPGEKSSGSQDLTAEDLSDSDTDEPPCLEVENRSESPIPVADQDNPVHAQERETTTHCENAAANQISQAVIQMIVEDLHPYNYFSTPAFQRFLQIVAPDYRLPSETYFFTKAVPQLYDSVREKIFLTLENVQSQKIHLTADIWTHDPSTDYFIVTVHWVSLETASSPSNGGTPNFRKWAVLCVTGLAKDCLITNILQELNDQIGLWLSPNFLTPSFIVSDNSSNVVHAIKGGGFTHVPCFLHCLNIVIQDFFCEHKSIENMLVAARKTCHHFSHSVKARQILQEFQNDHQLPWKNLKQDETGHWISTFYMLKWLLEHCYSVHHSLGRASGVVLTSLQWTLMTYVCDILKPFEEATQRVSVKTTGLNQVLPLIHHLLFSLQRLREDFQVRGITQALNLVDSLSLKLESDALLSAMLKSKHCILATLLDPCFKNSLEDFFPQGADLETYKQILAEEVCNYMESSPGACQISSSETSGPLVRLGTDSFTSIKEGTSSAGSLDSSAAGSVAVGSKSSLLPAAVAVVDEYFKEKYSELSGGDDPLVYWQRKVSIWPALTQVAIQYLSCPMCSWQSECMFTTNSHFHPKQIMNMDFDNIEQLIFLKMNLENVNYDYSTLILSWDPENKAVQSNEKEILP</sequence>
<evidence type="ECO:0000255" key="1">
    <source>
        <dbReference type="PROSITE-ProRule" id="PRU00027"/>
    </source>
</evidence>
<evidence type="ECO:0000256" key="2">
    <source>
        <dbReference type="SAM" id="MobiDB-lite"/>
    </source>
</evidence>
<evidence type="ECO:0000269" key="3">
    <source>
    </source>
</evidence>
<evidence type="ECO:0000269" key="4">
    <source>
    </source>
</evidence>
<evidence type="ECO:0000269" key="5">
    <source>
    </source>
</evidence>
<evidence type="ECO:0000269" key="6">
    <source>
    </source>
</evidence>
<evidence type="ECO:0000269" key="7">
    <source>
    </source>
</evidence>
<evidence type="ECO:0000269" key="8">
    <source>
    </source>
</evidence>
<evidence type="ECO:0000303" key="9">
    <source>
    </source>
</evidence>
<evidence type="ECO:0000303" key="10">
    <source>
    </source>
</evidence>
<evidence type="ECO:0000305" key="11"/>
<evidence type="ECO:0000312" key="12">
    <source>
        <dbReference type="EMBL" id="BAC29161.1"/>
    </source>
</evidence>
<evidence type="ECO:0000312" key="13">
    <source>
        <dbReference type="EMBL" id="BAC41160.1"/>
    </source>
</evidence>
<evidence type="ECO:0000312" key="14">
    <source>
        <dbReference type="EMBL" id="BAE26165.1"/>
    </source>
</evidence>
<evidence type="ECO:0000312" key="15">
    <source>
        <dbReference type="EMBL" id="CAT02778.1"/>
    </source>
</evidence>
<evidence type="ECO:0007744" key="16">
    <source>
    </source>
</evidence>
<reference evidence="11 15" key="1">
    <citation type="journal article" date="2009" name="PLoS Biol.">
        <title>ZBED6, a novel transcription factor derived from a domesticated DNA transposon regulates IGF2 expression and muscle growth.</title>
        <authorList>
            <person name="Markljung E."/>
            <person name="Jiang L."/>
            <person name="Jaffe J.D."/>
            <person name="Mikkelsen T.S."/>
            <person name="Wallerman O."/>
            <person name="Larhammar M."/>
            <person name="Zhang X."/>
            <person name="Wang L."/>
            <person name="Saenz-Vash V."/>
            <person name="Gnirke A."/>
            <person name="Lindroth A.M."/>
            <person name="Barres R."/>
            <person name="Yan J."/>
            <person name="Stromberg S."/>
            <person name="De S."/>
            <person name="Ponten F."/>
            <person name="Lander E.S."/>
            <person name="Carr S.A."/>
            <person name="Zierath J.R."/>
            <person name="Kullander K."/>
            <person name="Wadelius C."/>
            <person name="Lindblad-Toh K."/>
            <person name="Andersson G."/>
            <person name="Hjalm G."/>
            <person name="Andersson L."/>
        </authorList>
    </citation>
    <scope>NUCLEOTIDE SEQUENCE [MRNA] (ISOFORMS 1 AND 2)</scope>
    <scope>ALTERNATIVE INITIATION</scope>
    <scope>FUNCTION</scope>
    <scope>SUBCELLULAR LOCATION</scope>
    <scope>TISSUE SPECIFICITY</scope>
    <scope>IDENTIFICATION BY MASS SPECTROMETRY</scope>
    <source>
        <tissue evidence="3">Myoblast</tissue>
    </source>
</reference>
<reference evidence="11 13" key="2">
    <citation type="journal article" date="2005" name="Science">
        <title>The transcriptional landscape of the mammalian genome.</title>
        <authorList>
            <person name="Carninci P."/>
            <person name="Kasukawa T."/>
            <person name="Katayama S."/>
            <person name="Gough J."/>
            <person name="Frith M.C."/>
            <person name="Maeda N."/>
            <person name="Oyama R."/>
            <person name="Ravasi T."/>
            <person name="Lenhard B."/>
            <person name="Wells C."/>
            <person name="Kodzius R."/>
            <person name="Shimokawa K."/>
            <person name="Bajic V.B."/>
            <person name="Brenner S.E."/>
            <person name="Batalov S."/>
            <person name="Forrest A.R."/>
            <person name="Zavolan M."/>
            <person name="Davis M.J."/>
            <person name="Wilming L.G."/>
            <person name="Aidinis V."/>
            <person name="Allen J.E."/>
            <person name="Ambesi-Impiombato A."/>
            <person name="Apweiler R."/>
            <person name="Aturaliya R.N."/>
            <person name="Bailey T.L."/>
            <person name="Bansal M."/>
            <person name="Baxter L."/>
            <person name="Beisel K.W."/>
            <person name="Bersano T."/>
            <person name="Bono H."/>
            <person name="Chalk A.M."/>
            <person name="Chiu K.P."/>
            <person name="Choudhary V."/>
            <person name="Christoffels A."/>
            <person name="Clutterbuck D.R."/>
            <person name="Crowe M.L."/>
            <person name="Dalla E."/>
            <person name="Dalrymple B.P."/>
            <person name="de Bono B."/>
            <person name="Della Gatta G."/>
            <person name="di Bernardo D."/>
            <person name="Down T."/>
            <person name="Engstrom P."/>
            <person name="Fagiolini M."/>
            <person name="Faulkner G."/>
            <person name="Fletcher C.F."/>
            <person name="Fukushima T."/>
            <person name="Furuno M."/>
            <person name="Futaki S."/>
            <person name="Gariboldi M."/>
            <person name="Georgii-Hemming P."/>
            <person name="Gingeras T.R."/>
            <person name="Gojobori T."/>
            <person name="Green R.E."/>
            <person name="Gustincich S."/>
            <person name="Harbers M."/>
            <person name="Hayashi Y."/>
            <person name="Hensch T.K."/>
            <person name="Hirokawa N."/>
            <person name="Hill D."/>
            <person name="Huminiecki L."/>
            <person name="Iacono M."/>
            <person name="Ikeo K."/>
            <person name="Iwama A."/>
            <person name="Ishikawa T."/>
            <person name="Jakt M."/>
            <person name="Kanapin A."/>
            <person name="Katoh M."/>
            <person name="Kawasawa Y."/>
            <person name="Kelso J."/>
            <person name="Kitamura H."/>
            <person name="Kitano H."/>
            <person name="Kollias G."/>
            <person name="Krishnan S.P."/>
            <person name="Kruger A."/>
            <person name="Kummerfeld S.K."/>
            <person name="Kurochkin I.V."/>
            <person name="Lareau L.F."/>
            <person name="Lazarevic D."/>
            <person name="Lipovich L."/>
            <person name="Liu J."/>
            <person name="Liuni S."/>
            <person name="McWilliam S."/>
            <person name="Madan Babu M."/>
            <person name="Madera M."/>
            <person name="Marchionni L."/>
            <person name="Matsuda H."/>
            <person name="Matsuzawa S."/>
            <person name="Miki H."/>
            <person name="Mignone F."/>
            <person name="Miyake S."/>
            <person name="Morris K."/>
            <person name="Mottagui-Tabar S."/>
            <person name="Mulder N."/>
            <person name="Nakano N."/>
            <person name="Nakauchi H."/>
            <person name="Ng P."/>
            <person name="Nilsson R."/>
            <person name="Nishiguchi S."/>
            <person name="Nishikawa S."/>
            <person name="Nori F."/>
            <person name="Ohara O."/>
            <person name="Okazaki Y."/>
            <person name="Orlando V."/>
            <person name="Pang K.C."/>
            <person name="Pavan W.J."/>
            <person name="Pavesi G."/>
            <person name="Pesole G."/>
            <person name="Petrovsky N."/>
            <person name="Piazza S."/>
            <person name="Reed J."/>
            <person name="Reid J.F."/>
            <person name="Ring B.Z."/>
            <person name="Ringwald M."/>
            <person name="Rost B."/>
            <person name="Ruan Y."/>
            <person name="Salzberg S.L."/>
            <person name="Sandelin A."/>
            <person name="Schneider C."/>
            <person name="Schoenbach C."/>
            <person name="Sekiguchi K."/>
            <person name="Semple C.A."/>
            <person name="Seno S."/>
            <person name="Sessa L."/>
            <person name="Sheng Y."/>
            <person name="Shibata Y."/>
            <person name="Shimada H."/>
            <person name="Shimada K."/>
            <person name="Silva D."/>
            <person name="Sinclair B."/>
            <person name="Sperling S."/>
            <person name="Stupka E."/>
            <person name="Sugiura K."/>
            <person name="Sultana R."/>
            <person name="Takenaka Y."/>
            <person name="Taki K."/>
            <person name="Tammoja K."/>
            <person name="Tan S.L."/>
            <person name="Tang S."/>
            <person name="Taylor M.S."/>
            <person name="Tegner J."/>
            <person name="Teichmann S.A."/>
            <person name="Ueda H.R."/>
            <person name="van Nimwegen E."/>
            <person name="Verardo R."/>
            <person name="Wei C.L."/>
            <person name="Yagi K."/>
            <person name="Yamanishi H."/>
            <person name="Zabarovsky E."/>
            <person name="Zhu S."/>
            <person name="Zimmer A."/>
            <person name="Hide W."/>
            <person name="Bult C."/>
            <person name="Grimmond S.M."/>
            <person name="Teasdale R.D."/>
            <person name="Liu E.T."/>
            <person name="Brusic V."/>
            <person name="Quackenbush J."/>
            <person name="Wahlestedt C."/>
            <person name="Mattick J.S."/>
            <person name="Hume D.A."/>
            <person name="Kai C."/>
            <person name="Sasaki D."/>
            <person name="Tomaru Y."/>
            <person name="Fukuda S."/>
            <person name="Kanamori-Katayama M."/>
            <person name="Suzuki M."/>
            <person name="Aoki J."/>
            <person name="Arakawa T."/>
            <person name="Iida J."/>
            <person name="Imamura K."/>
            <person name="Itoh M."/>
            <person name="Kato T."/>
            <person name="Kawaji H."/>
            <person name="Kawagashira N."/>
            <person name="Kawashima T."/>
            <person name="Kojima M."/>
            <person name="Kondo S."/>
            <person name="Konno H."/>
            <person name="Nakano K."/>
            <person name="Ninomiya N."/>
            <person name="Nishio T."/>
            <person name="Okada M."/>
            <person name="Plessy C."/>
            <person name="Shibata K."/>
            <person name="Shiraki T."/>
            <person name="Suzuki S."/>
            <person name="Tagami M."/>
            <person name="Waki K."/>
            <person name="Watahiki A."/>
            <person name="Okamura-Oho Y."/>
            <person name="Suzuki H."/>
            <person name="Kawai J."/>
            <person name="Hayashizaki Y."/>
        </authorList>
    </citation>
    <scope>NUCLEOTIDE SEQUENCE [LARGE SCALE MRNA] (ISOFORM 1)</scope>
    <source>
        <strain evidence="13">C57BL/6J</strain>
        <tissue evidence="13">Diencephalon</tissue>
        <tissue evidence="14">Mammary gland</tissue>
        <tissue evidence="12">Urinary bladder</tissue>
    </source>
</reference>
<reference evidence="11" key="3">
    <citation type="journal article" date="2009" name="PLoS Biol.">
        <title>Lineage-specific biology revealed by a finished genome assembly of the mouse.</title>
        <authorList>
            <person name="Church D.M."/>
            <person name="Goodstadt L."/>
            <person name="Hillier L.W."/>
            <person name="Zody M.C."/>
            <person name="Goldstein S."/>
            <person name="She X."/>
            <person name="Bult C.J."/>
            <person name="Agarwala R."/>
            <person name="Cherry J.L."/>
            <person name="DiCuccio M."/>
            <person name="Hlavina W."/>
            <person name="Kapustin Y."/>
            <person name="Meric P."/>
            <person name="Maglott D."/>
            <person name="Birtle Z."/>
            <person name="Marques A.C."/>
            <person name="Graves T."/>
            <person name="Zhou S."/>
            <person name="Teague B."/>
            <person name="Potamousis K."/>
            <person name="Churas C."/>
            <person name="Place M."/>
            <person name="Herschleb J."/>
            <person name="Runnheim R."/>
            <person name="Forrest D."/>
            <person name="Amos-Landgraf J."/>
            <person name="Schwartz D.C."/>
            <person name="Cheng Z."/>
            <person name="Lindblad-Toh K."/>
            <person name="Eichler E.E."/>
            <person name="Ponting C.P."/>
        </authorList>
    </citation>
    <scope>NUCLEOTIDE SEQUENCE [LARGE SCALE GENOMIC DNA]</scope>
    <source>
        <strain>C57BL/6J</strain>
    </source>
</reference>
<reference key="4">
    <citation type="journal article" date="2010" name="Cell">
        <title>A tissue-specific atlas of mouse protein phosphorylation and expression.</title>
        <authorList>
            <person name="Huttlin E.L."/>
            <person name="Jedrychowski M.P."/>
            <person name="Elias J.E."/>
            <person name="Goswami T."/>
            <person name="Rad R."/>
            <person name="Beausoleil S.A."/>
            <person name="Villen J."/>
            <person name="Haas W."/>
            <person name="Sowa M.E."/>
            <person name="Gygi S.P."/>
        </authorList>
    </citation>
    <scope>PHOSPHORYLATION [LARGE SCALE ANALYSIS] AT SER-383</scope>
    <scope>IDENTIFICATION BY MASS SPECTROMETRY [LARGE SCALE ANALYSIS]</scope>
    <source>
        <tissue>Lung</tissue>
    </source>
</reference>
<reference key="5">
    <citation type="journal article" date="2010" name="EMBO Rep.">
        <title>A domesticated transposon mediates the effects of a single-nucleotide polymorphism responsible for enhanced muscle growth.</title>
        <authorList>
            <person name="Butter F."/>
            <person name="Kappei D."/>
            <person name="Buchholz F."/>
            <person name="Vermeulen M."/>
            <person name="Mann M."/>
        </authorList>
    </citation>
    <scope>IDENTIFICATION BY MASS SPECTROMETRY</scope>
    <scope>FUNCTION</scope>
</reference>
<reference key="6">
    <citation type="journal article" date="2013" name="Proc. Natl. Acad. Sci. U.S.A.">
        <title>Transcription factor ZBED6 affects gene expression, proliferation, and cell death in pancreatic beta cells.</title>
        <authorList>
            <person name="Wang X."/>
            <person name="Jiang L."/>
            <person name="Wallerman O."/>
            <person name="Engstroem U."/>
            <person name="Ameur A."/>
            <person name="Gupta R.K."/>
            <person name="Qi Y."/>
            <person name="Andersson L."/>
            <person name="Welsh N."/>
        </authorList>
    </citation>
    <scope>FUNCTION</scope>
    <scope>SUBCELLULAR LOCATION</scope>
    <scope>TISSUE SPECIFICITY</scope>
</reference>
<reference key="7">
    <citation type="journal article" date="2016" name="Sci. Rep.">
        <title>Knock-down of ZBED6 in insulin-producing cells promotes N-cadherin junctions between beta-cells and neural crest stem cells in vitro.</title>
        <authorList>
            <person name="Wang X."/>
            <person name="Xie B."/>
            <person name="Qi Y."/>
            <person name="Wallerman O."/>
            <person name="Vasylovska S."/>
            <person name="Andersson L."/>
            <person name="Kozlova E.N."/>
            <person name="Welsh N."/>
        </authorList>
    </citation>
    <scope>FUNCTION</scope>
    <scope>SUBCELLULAR LOCATION</scope>
</reference>
<reference key="8">
    <citation type="journal article" date="2018" name="Proc. Natl. Acad. Sci. U.S.A.">
        <title>The ZBED6-IGF2 axis has a major effect on growth of skeletal muscle and internal organs in placental mammals.</title>
        <authorList>
            <person name="Younis S."/>
            <person name="Schoenke M."/>
            <person name="Massart J."/>
            <person name="Hjortebjerg R."/>
            <person name="Sundstroem E."/>
            <person name="Gustafson U."/>
            <person name="Bjoernholm M."/>
            <person name="Krook A."/>
            <person name="Frystyk J."/>
            <person name="Zierath J.R."/>
            <person name="Andersson L."/>
        </authorList>
    </citation>
    <scope>FUNCTION</scope>
    <scope>DEVELOPMENTAL STAGE</scope>
    <scope>DISRUPTION PHENOTYPE</scope>
</reference>
<reference key="9">
    <citation type="journal article" date="2020" name="FASEB J.">
        <title>The importance of the ZBED6-IGF2 axis for metabolic regulation in mouse myoblast cells.</title>
        <authorList>
            <person name="Younis S."/>
            <person name="Naboulsi R."/>
            <person name="Wang X."/>
            <person name="Cao X."/>
            <person name="Larsson M."/>
            <person name="Sargsyan E."/>
            <person name="Bergsten P."/>
            <person name="Welsh N."/>
            <person name="Andersson L."/>
        </authorList>
    </citation>
    <scope>FUNCTION</scope>
    <scope>SUBCELLULAR LOCATION</scope>
</reference>
<keyword id="KW-0024">Alternative initiation</keyword>
<keyword id="KW-0963">Cytoplasm</keyword>
<keyword id="KW-0238">DNA-binding</keyword>
<keyword id="KW-0479">Metal-binding</keyword>
<keyword id="KW-0539">Nucleus</keyword>
<keyword id="KW-0597">Phosphoprotein</keyword>
<keyword id="KW-1185">Reference proteome</keyword>
<keyword id="KW-0677">Repeat</keyword>
<keyword id="KW-0678">Repressor</keyword>
<keyword id="KW-0804">Transcription</keyword>
<keyword id="KW-0805">Transcription regulation</keyword>
<keyword id="KW-0862">Zinc</keyword>
<keyword id="KW-0863">Zinc-finger</keyword>
<protein>
    <recommendedName>
        <fullName evidence="9">Zinc finger BED domain-containing protein 6</fullName>
    </recommendedName>
    <alternativeName>
        <fullName evidence="10">Muscle growth regulator</fullName>
        <shortName evidence="10">MGR</shortName>
    </alternativeName>
</protein>
<dbReference type="EMBL" id="FM882123">
    <property type="protein sequence ID" value="CAT02778.1"/>
    <property type="molecule type" value="mRNA"/>
</dbReference>
<dbReference type="EMBL" id="FM882123">
    <property type="protein sequence ID" value="CAT02779.1"/>
    <property type="molecule type" value="mRNA"/>
</dbReference>
<dbReference type="EMBL" id="AK035705">
    <property type="protein sequence ID" value="BAC29161.1"/>
    <property type="molecule type" value="mRNA"/>
</dbReference>
<dbReference type="EMBL" id="AK090300">
    <property type="protein sequence ID" value="BAC41160.1"/>
    <property type="status" value="ALT_INIT"/>
    <property type="molecule type" value="mRNA"/>
</dbReference>
<dbReference type="EMBL" id="AK144981">
    <property type="protein sequence ID" value="BAE26165.1"/>
    <property type="molecule type" value="mRNA"/>
</dbReference>
<dbReference type="EMBL" id="AC124338">
    <property type="status" value="NOT_ANNOTATED_CDS"/>
    <property type="molecule type" value="Genomic_DNA"/>
</dbReference>
<dbReference type="CCDS" id="CCDS56643.1">
    <molecule id="D2EAC2-1"/>
</dbReference>
<dbReference type="RefSeq" id="NP_001160024.1">
    <molecule id="D2EAC2-1"/>
    <property type="nucleotide sequence ID" value="NM_001166552.2"/>
</dbReference>
<dbReference type="RefSeq" id="NP_001382833.1">
    <molecule id="D2EAC2-1"/>
    <property type="nucleotide sequence ID" value="NM_001395904.1"/>
</dbReference>
<dbReference type="SMR" id="D2EAC2"/>
<dbReference type="FunCoup" id="D2EAC2">
    <property type="interactions" value="579"/>
</dbReference>
<dbReference type="STRING" id="10090.ENSMUSP00000136026"/>
<dbReference type="iPTMnet" id="D2EAC2"/>
<dbReference type="PhosphoSitePlus" id="D2EAC2"/>
<dbReference type="jPOST" id="D2EAC2"/>
<dbReference type="PaxDb" id="10090-ENSMUSP00000136026"/>
<dbReference type="PeptideAtlas" id="D2EAC2"/>
<dbReference type="ProteomicsDB" id="298491">
    <molecule id="D2EAC2-1"/>
</dbReference>
<dbReference type="ProteomicsDB" id="298492">
    <molecule id="D2EAC2-2"/>
</dbReference>
<dbReference type="Pumba" id="D2EAC2"/>
<dbReference type="Antibodypedia" id="77040">
    <property type="antibodies" value="10 antibodies from 7 providers"/>
</dbReference>
<dbReference type="Ensembl" id="ENSMUST00000179598.4">
    <molecule id="D2EAC2-1"/>
    <property type="protein sequence ID" value="ENSMUSP00000136026.2"/>
    <property type="gene ID" value="ENSMUSG00000094410.9"/>
</dbReference>
<dbReference type="GeneID" id="667118"/>
<dbReference type="KEGG" id="mmu:667118"/>
<dbReference type="UCSC" id="uc007cqr.2">
    <molecule id="D2EAC2-1"/>
    <property type="organism name" value="mouse"/>
</dbReference>
<dbReference type="AGR" id="MGI:3828086"/>
<dbReference type="CTD" id="100381270"/>
<dbReference type="MGI" id="MGI:3828086">
    <property type="gene designation" value="Zbed6"/>
</dbReference>
<dbReference type="VEuPathDB" id="HostDB:ENSMUSG00000094410"/>
<dbReference type="eggNOG" id="KOG1121">
    <property type="taxonomic scope" value="Eukaryota"/>
</dbReference>
<dbReference type="GeneTree" id="ENSGT00940000163411"/>
<dbReference type="HOGENOM" id="CLU_303823_0_0_1"/>
<dbReference type="InParanoid" id="D2EAC2"/>
<dbReference type="OMA" id="YTWRAIC"/>
<dbReference type="OrthoDB" id="1607513at2759"/>
<dbReference type="PhylomeDB" id="D2EAC2"/>
<dbReference type="TreeFam" id="TF322818"/>
<dbReference type="BioGRID-ORCS" id="667118">
    <property type="hits" value="3 hits in 44 CRISPR screens"/>
</dbReference>
<dbReference type="PRO" id="PR:D2EAC2"/>
<dbReference type="Proteomes" id="UP000000589">
    <property type="component" value="Chromosome 1"/>
</dbReference>
<dbReference type="RNAct" id="D2EAC2">
    <property type="molecule type" value="protein"/>
</dbReference>
<dbReference type="Bgee" id="ENSMUSG00000094410">
    <property type="expression patterns" value="Expressed in ascending aorta and 200 other cell types or tissues"/>
</dbReference>
<dbReference type="ExpressionAtlas" id="D2EAC2">
    <property type="expression patterns" value="baseline and differential"/>
</dbReference>
<dbReference type="GO" id="GO:0034451">
    <property type="term" value="C:centriolar satellite"/>
    <property type="evidence" value="ECO:0007669"/>
    <property type="project" value="Ensembl"/>
</dbReference>
<dbReference type="GO" id="GO:0005737">
    <property type="term" value="C:cytoplasm"/>
    <property type="evidence" value="ECO:0000314"/>
    <property type="project" value="UniProtKB"/>
</dbReference>
<dbReference type="GO" id="GO:0005730">
    <property type="term" value="C:nucleolus"/>
    <property type="evidence" value="ECO:0000314"/>
    <property type="project" value="UniProtKB"/>
</dbReference>
<dbReference type="GO" id="GO:0005654">
    <property type="term" value="C:nucleoplasm"/>
    <property type="evidence" value="ECO:0007669"/>
    <property type="project" value="Ensembl"/>
</dbReference>
<dbReference type="GO" id="GO:0005634">
    <property type="term" value="C:nucleus"/>
    <property type="evidence" value="ECO:0000314"/>
    <property type="project" value="MGI"/>
</dbReference>
<dbReference type="GO" id="GO:0001227">
    <property type="term" value="F:DNA-binding transcription repressor activity, RNA polymerase II-specific"/>
    <property type="evidence" value="ECO:0000314"/>
    <property type="project" value="ARUK-UCL"/>
</dbReference>
<dbReference type="GO" id="GO:0046983">
    <property type="term" value="F:protein dimerization activity"/>
    <property type="evidence" value="ECO:0007669"/>
    <property type="project" value="InterPro"/>
</dbReference>
<dbReference type="GO" id="GO:0000976">
    <property type="term" value="F:transcription cis-regulatory region binding"/>
    <property type="evidence" value="ECO:0000314"/>
    <property type="project" value="UniProtKB"/>
</dbReference>
<dbReference type="GO" id="GO:0008270">
    <property type="term" value="F:zinc ion binding"/>
    <property type="evidence" value="ECO:0007669"/>
    <property type="project" value="UniProtKB-KW"/>
</dbReference>
<dbReference type="GO" id="GO:0001835">
    <property type="term" value="P:blastocyst hatching"/>
    <property type="evidence" value="ECO:0000315"/>
    <property type="project" value="MGI"/>
</dbReference>
<dbReference type="GO" id="GO:0045892">
    <property type="term" value="P:negative regulation of DNA-templated transcription"/>
    <property type="evidence" value="ECO:0000315"/>
    <property type="project" value="UniProtKB"/>
</dbReference>
<dbReference type="GO" id="GO:0051148">
    <property type="term" value="P:negative regulation of muscle cell differentiation"/>
    <property type="evidence" value="ECO:0000315"/>
    <property type="project" value="UniProtKB"/>
</dbReference>
<dbReference type="GO" id="GO:0000122">
    <property type="term" value="P:negative regulation of transcription by RNA polymerase II"/>
    <property type="evidence" value="ECO:0000314"/>
    <property type="project" value="UniProtKB"/>
</dbReference>
<dbReference type="GO" id="GO:0061178">
    <property type="term" value="P:regulation of insulin secretion involved in cellular response to glucose stimulus"/>
    <property type="evidence" value="ECO:0000315"/>
    <property type="project" value="UniProtKB"/>
</dbReference>
<dbReference type="InterPro" id="IPR008906">
    <property type="entry name" value="HATC_C_dom"/>
</dbReference>
<dbReference type="InterPro" id="IPR012337">
    <property type="entry name" value="RNaseH-like_sf"/>
</dbReference>
<dbReference type="InterPro" id="IPR052865">
    <property type="entry name" value="Zinc_finger_BED"/>
</dbReference>
<dbReference type="InterPro" id="IPR003656">
    <property type="entry name" value="Znf_BED"/>
</dbReference>
<dbReference type="InterPro" id="IPR036236">
    <property type="entry name" value="Znf_C2H2_sf"/>
</dbReference>
<dbReference type="PANTHER" id="PTHR47241">
    <property type="entry name" value="FINGER PROTEIN, PUTATIVE-RELATED"/>
    <property type="match status" value="1"/>
</dbReference>
<dbReference type="PANTHER" id="PTHR47241:SF2">
    <property type="entry name" value="ZINC FINGER BED DOMAIN-CONTAINING PROTEIN 6"/>
    <property type="match status" value="1"/>
</dbReference>
<dbReference type="Pfam" id="PF05699">
    <property type="entry name" value="Dimer_Tnp_hAT"/>
    <property type="match status" value="1"/>
</dbReference>
<dbReference type="Pfam" id="PF02892">
    <property type="entry name" value="zf-BED"/>
    <property type="match status" value="2"/>
</dbReference>
<dbReference type="SMART" id="SM00614">
    <property type="entry name" value="ZnF_BED"/>
    <property type="match status" value="2"/>
</dbReference>
<dbReference type="SUPFAM" id="SSF57667">
    <property type="entry name" value="beta-beta-alpha zinc fingers"/>
    <property type="match status" value="2"/>
</dbReference>
<dbReference type="SUPFAM" id="SSF140996">
    <property type="entry name" value="Hermes dimerisation domain"/>
    <property type="match status" value="1"/>
</dbReference>
<dbReference type="SUPFAM" id="SSF53098">
    <property type="entry name" value="Ribonuclease H-like"/>
    <property type="match status" value="1"/>
</dbReference>
<dbReference type="PROSITE" id="PS50808">
    <property type="entry name" value="ZF_BED"/>
    <property type="match status" value="2"/>
</dbReference>
<feature type="chain" id="PRO_0000392574" description="Zinc finger BED domain-containing protein 6">
    <location>
        <begin position="1"/>
        <end position="980"/>
    </location>
</feature>
<feature type="zinc finger region" description="BED-type 1" evidence="1">
    <location>
        <begin position="130"/>
        <end position="187"/>
    </location>
</feature>
<feature type="zinc finger region" description="BED-type 2" evidence="1">
    <location>
        <begin position="265"/>
        <end position="322"/>
    </location>
</feature>
<feature type="region of interest" description="Required for nucleolar localization" evidence="3">
    <location>
        <begin position="1"/>
        <end position="89"/>
    </location>
</feature>
<feature type="region of interest" description="Disordered" evidence="2">
    <location>
        <begin position="89"/>
        <end position="109"/>
    </location>
</feature>
<feature type="region of interest" description="Disordered" evidence="2">
    <location>
        <begin position="201"/>
        <end position="239"/>
    </location>
</feature>
<feature type="region of interest" description="Disordered" evidence="2">
    <location>
        <begin position="328"/>
        <end position="397"/>
    </location>
</feature>
<feature type="region of interest" description="HATC (Hobo-Ac-Tam3) domain">
    <location>
        <begin position="868"/>
        <end position="950"/>
    </location>
</feature>
<feature type="compositionally biased region" description="Low complexity" evidence="2">
    <location>
        <begin position="203"/>
        <end position="215"/>
    </location>
</feature>
<feature type="compositionally biased region" description="Acidic residues" evidence="2">
    <location>
        <begin position="360"/>
        <end position="373"/>
    </location>
</feature>
<feature type="binding site" evidence="1">
    <location>
        <position position="151"/>
    </location>
    <ligand>
        <name>Zn(2+)</name>
        <dbReference type="ChEBI" id="CHEBI:29105"/>
        <label>1</label>
    </ligand>
</feature>
<feature type="binding site" evidence="1">
    <location>
        <position position="154"/>
    </location>
    <ligand>
        <name>Zn(2+)</name>
        <dbReference type="ChEBI" id="CHEBI:29105"/>
        <label>1</label>
    </ligand>
</feature>
<feature type="binding site" evidence="1">
    <location>
        <position position="175"/>
    </location>
    <ligand>
        <name>Zn(2+)</name>
        <dbReference type="ChEBI" id="CHEBI:29105"/>
        <label>1</label>
    </ligand>
</feature>
<feature type="binding site" evidence="1">
    <location>
        <position position="180"/>
    </location>
    <ligand>
        <name>Zn(2+)</name>
        <dbReference type="ChEBI" id="CHEBI:29105"/>
        <label>1</label>
    </ligand>
</feature>
<feature type="binding site" evidence="1">
    <location>
        <position position="286"/>
    </location>
    <ligand>
        <name>Zn(2+)</name>
        <dbReference type="ChEBI" id="CHEBI:29105"/>
        <label>2</label>
    </ligand>
</feature>
<feature type="binding site" evidence="1">
    <location>
        <position position="289"/>
    </location>
    <ligand>
        <name>Zn(2+)</name>
        <dbReference type="ChEBI" id="CHEBI:29105"/>
        <label>2</label>
    </ligand>
</feature>
<feature type="binding site" evidence="1">
    <location>
        <position position="310"/>
    </location>
    <ligand>
        <name>Zn(2+)</name>
        <dbReference type="ChEBI" id="CHEBI:29105"/>
        <label>2</label>
    </ligand>
</feature>
<feature type="binding site" evidence="1">
    <location>
        <position position="315"/>
    </location>
    <ligand>
        <name>Zn(2+)</name>
        <dbReference type="ChEBI" id="CHEBI:29105"/>
        <label>2</label>
    </ligand>
</feature>
<feature type="modified residue" description="Phosphoserine" evidence="16">
    <location>
        <position position="383"/>
    </location>
</feature>
<feature type="splice variant" id="VSP_053206" description="In isoform 2." evidence="9">
    <location>
        <begin position="1"/>
        <end position="46"/>
    </location>
</feature>
<feature type="sequence conflict" description="In Ref. 2; BAE26165." evidence="11" ref="2">
    <original>H</original>
    <variation>Q</variation>
    <location>
        <position position="574"/>
    </location>
</feature>
<feature type="sequence conflict" description="In Ref. 2; BAC41160." evidence="11" ref="2">
    <original>T</original>
    <variation>I</variation>
    <location>
        <position position="901"/>
    </location>
</feature>